<sequence length="332" mass="36651">MPGPLRVLITGAAGQIAYNLSNMVANGNLFGKDQQIILHLLDIPEAKTVLDGVVMELQDCAFTVLAGIVPTHCLKEAFTDIDVALMVGAMPRKQGMERRDLLSSNVKIFKEQGEALDKYAKKTVKVLVVGNPANTNCLIMSKYAPSIPKENFTALTRLDHNRAIYQVAAKAGVPNTCVKNVCIWGNHSNKQFPDLSHAVVTKDGKQHPAKELINDEKWVKEVFIPCVQNRGAAVIGLRKLSRAASAAKAIVDQMRDWWFGTKEGEWVSMSVYSTGDHYGAPKDIYFSFPVTIKDGHYKVVDGLSMDEWSRSLFNLSADELVDEREVALASFK</sequence>
<protein>
    <recommendedName>
        <fullName>Malate dehydrogenase, cytoplasmic</fullName>
        <ecNumber>1.1.1.37</ecNumber>
    </recommendedName>
</protein>
<name>MDHC_ECHGR</name>
<feature type="chain" id="PRO_0000113408" description="Malate dehydrogenase, cytoplasmic">
    <location>
        <begin position="1"/>
        <end position="332"/>
    </location>
</feature>
<feature type="active site" description="Proton acceptor" evidence="1">
    <location>
        <position position="187"/>
    </location>
</feature>
<feature type="binding site" evidence="1">
    <location>
        <begin position="11"/>
        <end position="17"/>
    </location>
    <ligand>
        <name>NAD(+)</name>
        <dbReference type="ChEBI" id="CHEBI:57540"/>
    </ligand>
</feature>
<feature type="binding site" evidence="2">
    <location>
        <position position="92"/>
    </location>
    <ligand>
        <name>substrate</name>
    </ligand>
</feature>
<feature type="binding site" evidence="2">
    <location>
        <position position="98"/>
    </location>
    <ligand>
        <name>substrate</name>
    </ligand>
</feature>
<feature type="binding site" evidence="1">
    <location>
        <position position="105"/>
    </location>
    <ligand>
        <name>NAD(+)</name>
        <dbReference type="ChEBI" id="CHEBI:57540"/>
    </ligand>
</feature>
<feature type="binding site" evidence="1">
    <location>
        <position position="112"/>
    </location>
    <ligand>
        <name>NAD(+)</name>
        <dbReference type="ChEBI" id="CHEBI:57540"/>
    </ligand>
</feature>
<feature type="binding site" evidence="1">
    <location>
        <begin position="129"/>
        <end position="131"/>
    </location>
    <ligand>
        <name>NAD(+)</name>
        <dbReference type="ChEBI" id="CHEBI:57540"/>
    </ligand>
</feature>
<feature type="binding site" evidence="2">
    <location>
        <position position="131"/>
    </location>
    <ligand>
        <name>substrate</name>
    </ligand>
</feature>
<feature type="binding site" evidence="2">
    <location>
        <position position="162"/>
    </location>
    <ligand>
        <name>substrate</name>
    </ligand>
</feature>
<organism>
    <name type="scientific">Echinococcus granulosus</name>
    <name type="common">Hydatid tapeworm</name>
    <dbReference type="NCBI Taxonomy" id="6210"/>
    <lineage>
        <taxon>Eukaryota</taxon>
        <taxon>Metazoa</taxon>
        <taxon>Spiralia</taxon>
        <taxon>Lophotrochozoa</taxon>
        <taxon>Platyhelminthes</taxon>
        <taxon>Cestoda</taxon>
        <taxon>Eucestoda</taxon>
        <taxon>Cyclophyllidea</taxon>
        <taxon>Taeniidae</taxon>
        <taxon>Echinococcus</taxon>
        <taxon>Echinococcus granulosus group</taxon>
    </lineage>
</organism>
<evidence type="ECO:0000250" key="1"/>
<evidence type="ECO:0000255" key="2">
    <source>
        <dbReference type="PROSITE-ProRule" id="PRU10004"/>
    </source>
</evidence>
<evidence type="ECO:0000305" key="3"/>
<gene>
    <name type="primary">MDH</name>
</gene>
<keyword id="KW-0963">Cytoplasm</keyword>
<keyword id="KW-0520">NAD</keyword>
<keyword id="KW-0560">Oxidoreductase</keyword>
<keyword id="KW-0816">Tricarboxylic acid cycle</keyword>
<comment type="catalytic activity">
    <reaction evidence="2">
        <text>(S)-malate + NAD(+) = oxaloacetate + NADH + H(+)</text>
        <dbReference type="Rhea" id="RHEA:21432"/>
        <dbReference type="ChEBI" id="CHEBI:15378"/>
        <dbReference type="ChEBI" id="CHEBI:15589"/>
        <dbReference type="ChEBI" id="CHEBI:16452"/>
        <dbReference type="ChEBI" id="CHEBI:57540"/>
        <dbReference type="ChEBI" id="CHEBI:57945"/>
        <dbReference type="EC" id="1.1.1.37"/>
    </reaction>
</comment>
<comment type="subunit">
    <text>Homodimer.</text>
</comment>
<comment type="subcellular location">
    <subcellularLocation>
        <location>Cytoplasm</location>
    </subcellularLocation>
</comment>
<comment type="similarity">
    <text evidence="3">Belongs to the LDH/MDH superfamily. MDH type 2 family.</text>
</comment>
<proteinExistence type="evidence at transcript level"/>
<reference key="1">
    <citation type="journal article" date="1993" name="Mol. Biochem. Parasitol.">
        <title>Molecular cloning and characterization of an Echinococcus granulosus cDNA encoding malate dehydrogenase.</title>
        <authorList>
            <person name="Rodrigues J.J."/>
            <person name="Ferreira H.B."/>
            <person name="Zaha A."/>
        </authorList>
    </citation>
    <scope>NUCLEOTIDE SEQUENCE [MRNA]</scope>
</reference>
<reference key="2">
    <citation type="submission" date="1998-08" db="EMBL/GenBank/DDBJ databases">
        <authorList>
            <person name="Rodrigues J.J."/>
        </authorList>
    </citation>
    <scope>SEQUENCE REVISION</scope>
</reference>
<accession>Q04820</accession>
<dbReference type="EC" id="1.1.1.37"/>
<dbReference type="EMBL" id="L08894">
    <property type="protein sequence ID" value="AAC28239.1"/>
    <property type="molecule type" value="mRNA"/>
</dbReference>
<dbReference type="PIR" id="T09228">
    <property type="entry name" value="T09228"/>
</dbReference>
<dbReference type="SMR" id="Q04820"/>
<dbReference type="OrthoDB" id="4069699at2759"/>
<dbReference type="Proteomes" id="UP000492820">
    <property type="component" value="Unplaced"/>
</dbReference>
<dbReference type="GO" id="GO:0005737">
    <property type="term" value="C:cytoplasm"/>
    <property type="evidence" value="ECO:0007669"/>
    <property type="project" value="UniProtKB-SubCell"/>
</dbReference>
<dbReference type="GO" id="GO:0030060">
    <property type="term" value="F:L-malate dehydrogenase (NAD+) activity"/>
    <property type="evidence" value="ECO:0007669"/>
    <property type="project" value="UniProtKB-EC"/>
</dbReference>
<dbReference type="GO" id="GO:0006108">
    <property type="term" value="P:malate metabolic process"/>
    <property type="evidence" value="ECO:0007669"/>
    <property type="project" value="InterPro"/>
</dbReference>
<dbReference type="GO" id="GO:0006099">
    <property type="term" value="P:tricarboxylic acid cycle"/>
    <property type="evidence" value="ECO:0007669"/>
    <property type="project" value="UniProtKB-KW"/>
</dbReference>
<dbReference type="CDD" id="cd01336">
    <property type="entry name" value="MDH_cytoplasmic_cytosolic"/>
    <property type="match status" value="1"/>
</dbReference>
<dbReference type="FunFam" id="3.40.50.720:FF:000010">
    <property type="entry name" value="Malate dehydrogenase"/>
    <property type="match status" value="1"/>
</dbReference>
<dbReference type="FunFam" id="3.90.110.10:FF:000014">
    <property type="entry name" value="Malate dehydrogenase"/>
    <property type="match status" value="1"/>
</dbReference>
<dbReference type="Gene3D" id="3.90.110.10">
    <property type="entry name" value="Lactate dehydrogenase/glycoside hydrolase, family 4, C-terminal"/>
    <property type="match status" value="1"/>
</dbReference>
<dbReference type="Gene3D" id="3.40.50.720">
    <property type="entry name" value="NAD(P)-binding Rossmann-like Domain"/>
    <property type="match status" value="1"/>
</dbReference>
<dbReference type="InterPro" id="IPR001557">
    <property type="entry name" value="L-lactate/malate_DH"/>
</dbReference>
<dbReference type="InterPro" id="IPR022383">
    <property type="entry name" value="Lactate/malate_DH_C"/>
</dbReference>
<dbReference type="InterPro" id="IPR001236">
    <property type="entry name" value="Lactate/malate_DH_N"/>
</dbReference>
<dbReference type="InterPro" id="IPR015955">
    <property type="entry name" value="Lactate_DH/Glyco_Ohase_4_C"/>
</dbReference>
<dbReference type="InterPro" id="IPR001252">
    <property type="entry name" value="Malate_DH_AS"/>
</dbReference>
<dbReference type="InterPro" id="IPR011274">
    <property type="entry name" value="Malate_DH_NAD-dep_euk"/>
</dbReference>
<dbReference type="InterPro" id="IPR010945">
    <property type="entry name" value="Malate_DH_type2"/>
</dbReference>
<dbReference type="InterPro" id="IPR036291">
    <property type="entry name" value="NAD(P)-bd_dom_sf"/>
</dbReference>
<dbReference type="NCBIfam" id="TIGR01759">
    <property type="entry name" value="MalateDH-SF1"/>
    <property type="match status" value="1"/>
</dbReference>
<dbReference type="NCBIfam" id="TIGR01758">
    <property type="entry name" value="MDH_euk_cyt"/>
    <property type="match status" value="1"/>
</dbReference>
<dbReference type="NCBIfam" id="NF003916">
    <property type="entry name" value="PRK05442.1"/>
    <property type="match status" value="1"/>
</dbReference>
<dbReference type="PANTHER" id="PTHR23382">
    <property type="entry name" value="MALATE DEHYDROGENASE"/>
    <property type="match status" value="1"/>
</dbReference>
<dbReference type="Pfam" id="PF02866">
    <property type="entry name" value="Ldh_1_C"/>
    <property type="match status" value="1"/>
</dbReference>
<dbReference type="Pfam" id="PF00056">
    <property type="entry name" value="Ldh_1_N"/>
    <property type="match status" value="1"/>
</dbReference>
<dbReference type="PIRSF" id="PIRSF000102">
    <property type="entry name" value="Lac_mal_DH"/>
    <property type="match status" value="1"/>
</dbReference>
<dbReference type="SUPFAM" id="SSF56327">
    <property type="entry name" value="LDH C-terminal domain-like"/>
    <property type="match status" value="1"/>
</dbReference>
<dbReference type="SUPFAM" id="SSF51735">
    <property type="entry name" value="NAD(P)-binding Rossmann-fold domains"/>
    <property type="match status" value="1"/>
</dbReference>
<dbReference type="PROSITE" id="PS00068">
    <property type="entry name" value="MDH"/>
    <property type="match status" value="1"/>
</dbReference>